<name>IFNB_FELCA</name>
<comment type="function">
    <text evidence="1 2">Type I interferon cytokine that plays a key role in the innate immune response to infection, developing tumors and other inflammatory stimuli. Signals via binding to high-affinity (IFNAR2) and low-affinity (IFNAR1) heterodimeric receptor, activating the canonical Jak-STAT signaling pathway resulting in transcriptional activation or repression of interferon-regulated genes that encode the effectors of the interferon response, such as antiviral proteins, regulators of cell proliferation and differentiation, and immunoregulatory proteins (By similarity). Signals mostly via binding to a IFNAR1-IFNAR2 heterodimeric receptor, but can also function with IFNAR1 alone and independently of Jak-STAT pathways. Elicits a wide variety of responses, including antiviral and antibacterial activities, and can regulate the development of B-cells, myelopoiesis and lipopolysaccharide (LPS)-inducible production of tumor necrosis factor. Plays a role in neuronal homeostasis by regulating dopamine turnover and protecting dopaminergic neurons: acts by promoting neuronal autophagy and alpha-synuclein clearance, thereby preventing dopaminergic neuron loss. IFNB1 is more potent than interferon-alpha (IFN-alpha) in inducing the apoptotic and antiproliferative pathways required for control of tumor cell growth (By similarity).</text>
</comment>
<comment type="subunit">
    <text evidence="1">Monomer.</text>
</comment>
<comment type="subcellular location">
    <subcellularLocation>
        <location evidence="1">Secreted</location>
    </subcellularLocation>
</comment>
<comment type="similarity">
    <text evidence="5">Belongs to the alpha/beta interferon family.</text>
</comment>
<dbReference type="EMBL" id="AB021707">
    <property type="protein sequence ID" value="BAA93629.1"/>
    <property type="molecule type" value="Genomic_DNA"/>
</dbReference>
<dbReference type="RefSeq" id="NP_001009297.1">
    <property type="nucleotide sequence ID" value="NM_001009297.1"/>
</dbReference>
<dbReference type="SMR" id="Q9N2J0"/>
<dbReference type="FunCoup" id="Q9N2J0">
    <property type="interactions" value="46"/>
</dbReference>
<dbReference type="STRING" id="9685.ENSFCAP00000004253"/>
<dbReference type="GlyCosmos" id="Q9N2J0">
    <property type="glycosylation" value="4 sites, No reported glycans"/>
</dbReference>
<dbReference type="PaxDb" id="9685-ENSFCAP00000004253"/>
<dbReference type="Ensembl" id="ENSFCAT00000004603.3">
    <property type="protein sequence ID" value="ENSFCAP00000004253.1"/>
    <property type="gene ID" value="ENSFCAG00000004604.3"/>
</dbReference>
<dbReference type="GeneID" id="493849"/>
<dbReference type="KEGG" id="fca:493849"/>
<dbReference type="CTD" id="3456"/>
<dbReference type="VGNC" id="VGNC:67702">
    <property type="gene designation" value="IFNB1"/>
</dbReference>
<dbReference type="eggNOG" id="ENOG502SQGR">
    <property type="taxonomic scope" value="Eukaryota"/>
</dbReference>
<dbReference type="GeneTree" id="ENSGT01000000214430"/>
<dbReference type="HOGENOM" id="CLU_109427_1_0_1"/>
<dbReference type="InParanoid" id="Q9N2J0"/>
<dbReference type="OMA" id="HWQKEHL"/>
<dbReference type="OrthoDB" id="8922121at2759"/>
<dbReference type="Proteomes" id="UP000011712">
    <property type="component" value="Chromosome D4"/>
</dbReference>
<dbReference type="Bgee" id="ENSFCAG00000004604">
    <property type="expression patterns" value="Expressed in eyeball of camera-type eye"/>
</dbReference>
<dbReference type="GO" id="GO:0005615">
    <property type="term" value="C:extracellular space"/>
    <property type="evidence" value="ECO:0000318"/>
    <property type="project" value="GO_Central"/>
</dbReference>
<dbReference type="GO" id="GO:0005125">
    <property type="term" value="F:cytokine activity"/>
    <property type="evidence" value="ECO:0000318"/>
    <property type="project" value="GO_Central"/>
</dbReference>
<dbReference type="GO" id="GO:0005132">
    <property type="term" value="F:type I interferon receptor binding"/>
    <property type="evidence" value="ECO:0000318"/>
    <property type="project" value="GO_Central"/>
</dbReference>
<dbReference type="GO" id="GO:0002250">
    <property type="term" value="P:adaptive immune response"/>
    <property type="evidence" value="ECO:0000318"/>
    <property type="project" value="GO_Central"/>
</dbReference>
<dbReference type="GO" id="GO:0002312">
    <property type="term" value="P:B cell activation involved in immune response"/>
    <property type="evidence" value="ECO:0000318"/>
    <property type="project" value="GO_Central"/>
</dbReference>
<dbReference type="GO" id="GO:0051607">
    <property type="term" value="P:defense response to virus"/>
    <property type="evidence" value="ECO:0000250"/>
    <property type="project" value="UniProtKB"/>
</dbReference>
<dbReference type="GO" id="GO:0006959">
    <property type="term" value="P:humoral immune response"/>
    <property type="evidence" value="ECO:0000318"/>
    <property type="project" value="GO_Central"/>
</dbReference>
<dbReference type="GO" id="GO:0002323">
    <property type="term" value="P:natural killer cell activation involved in immune response"/>
    <property type="evidence" value="ECO:0000318"/>
    <property type="project" value="GO_Central"/>
</dbReference>
<dbReference type="GO" id="GO:0140123">
    <property type="term" value="P:negative regulation of Lewy body formation"/>
    <property type="evidence" value="ECO:0000250"/>
    <property type="project" value="UniProtKB"/>
</dbReference>
<dbReference type="GO" id="GO:0070050">
    <property type="term" value="P:neuron cellular homeostasis"/>
    <property type="evidence" value="ECO:0000250"/>
    <property type="project" value="UniProtKB"/>
</dbReference>
<dbReference type="GO" id="GO:0010508">
    <property type="term" value="P:positive regulation of autophagy"/>
    <property type="evidence" value="ECO:0000250"/>
    <property type="project" value="UniProtKB"/>
</dbReference>
<dbReference type="GO" id="GO:0043330">
    <property type="term" value="P:response to exogenous dsRNA"/>
    <property type="evidence" value="ECO:0000318"/>
    <property type="project" value="GO_Central"/>
</dbReference>
<dbReference type="GO" id="GO:0002286">
    <property type="term" value="P:T cell activation involved in immune response"/>
    <property type="evidence" value="ECO:0000318"/>
    <property type="project" value="GO_Central"/>
</dbReference>
<dbReference type="GO" id="GO:0060337">
    <property type="term" value="P:type I interferon-mediated signaling pathway"/>
    <property type="evidence" value="ECO:0000318"/>
    <property type="project" value="GO_Central"/>
</dbReference>
<dbReference type="CDD" id="cd00095">
    <property type="entry name" value="IFab"/>
    <property type="match status" value="1"/>
</dbReference>
<dbReference type="FunFam" id="1.20.1250.10:FF:000026">
    <property type="entry name" value="Interferon beta"/>
    <property type="match status" value="1"/>
</dbReference>
<dbReference type="Gene3D" id="1.20.1250.10">
    <property type="match status" value="1"/>
</dbReference>
<dbReference type="InterPro" id="IPR009079">
    <property type="entry name" value="4_helix_cytokine-like_core"/>
</dbReference>
<dbReference type="InterPro" id="IPR000471">
    <property type="entry name" value="Interferon_alpha/beta/delta"/>
</dbReference>
<dbReference type="PANTHER" id="PTHR11691:SF73">
    <property type="entry name" value="INTERFERON BETA"/>
    <property type="match status" value="1"/>
</dbReference>
<dbReference type="PANTHER" id="PTHR11691">
    <property type="entry name" value="TYPE I INTERFERON"/>
    <property type="match status" value="1"/>
</dbReference>
<dbReference type="Pfam" id="PF00143">
    <property type="entry name" value="Interferon"/>
    <property type="match status" value="1"/>
</dbReference>
<dbReference type="PRINTS" id="PR00266">
    <property type="entry name" value="INTERFERONAB"/>
</dbReference>
<dbReference type="SMART" id="SM00076">
    <property type="entry name" value="IFabd"/>
    <property type="match status" value="1"/>
</dbReference>
<dbReference type="SUPFAM" id="SSF47266">
    <property type="entry name" value="4-helical cytokines"/>
    <property type="match status" value="1"/>
</dbReference>
<dbReference type="PROSITE" id="PS00252">
    <property type="entry name" value="INTERFERON_A_B_D"/>
    <property type="match status" value="1"/>
</dbReference>
<protein>
    <recommendedName>
        <fullName>Interferon beta</fullName>
        <shortName>IFN-beta</shortName>
    </recommendedName>
</protein>
<feature type="signal peptide" evidence="4">
    <location>
        <begin position="1"/>
        <end position="21"/>
    </location>
</feature>
<feature type="chain" id="PRO_0000016399" description="Interferon beta">
    <location>
        <begin position="22"/>
        <end position="186"/>
    </location>
</feature>
<feature type="modified residue" description="Phosphotyrosine" evidence="3">
    <location>
        <position position="24"/>
    </location>
</feature>
<feature type="glycosylation site" description="N-linked (GlcNAc...) asparagine" evidence="4">
    <location>
        <position position="46"/>
    </location>
</feature>
<feature type="glycosylation site" description="N-linked (GlcNAc...) asparagine" evidence="4">
    <location>
        <position position="101"/>
    </location>
</feature>
<feature type="glycosylation site" description="N-linked (GlcNAc...) asparagine" evidence="4">
    <location>
        <position position="131"/>
    </location>
</feature>
<feature type="glycosylation site" description="N-linked (GlcNAc...) asparagine" evidence="4">
    <location>
        <position position="136"/>
    </location>
</feature>
<feature type="disulfide bond" evidence="1">
    <location>
        <begin position="52"/>
        <end position="161"/>
    </location>
</feature>
<proteinExistence type="inferred from homology"/>
<accession>Q9N2J0</accession>
<organism>
    <name type="scientific">Felis catus</name>
    <name type="common">Cat</name>
    <name type="synonym">Felis silvestris catus</name>
    <dbReference type="NCBI Taxonomy" id="9685"/>
    <lineage>
        <taxon>Eukaryota</taxon>
        <taxon>Metazoa</taxon>
        <taxon>Chordata</taxon>
        <taxon>Craniata</taxon>
        <taxon>Vertebrata</taxon>
        <taxon>Euteleostomi</taxon>
        <taxon>Mammalia</taxon>
        <taxon>Eutheria</taxon>
        <taxon>Laurasiatheria</taxon>
        <taxon>Carnivora</taxon>
        <taxon>Feliformia</taxon>
        <taxon>Felidae</taxon>
        <taxon>Felinae</taxon>
        <taxon>Felis</taxon>
    </lineage>
</organism>
<keyword id="KW-0051">Antiviral defense</keyword>
<keyword id="KW-0202">Cytokine</keyword>
<keyword id="KW-1015">Disulfide bond</keyword>
<keyword id="KW-0325">Glycoprotein</keyword>
<keyword id="KW-0597">Phosphoprotein</keyword>
<keyword id="KW-1185">Reference proteome</keyword>
<keyword id="KW-0964">Secreted</keyword>
<keyword id="KW-0732">Signal</keyword>
<sequence>MTGRCILQIALLVCFFTTAHSVSYKLLGFQLRSSSLECQELLVNLNRTSKYCLKDRMNFEVPEEIKKSQRFQKEEAILVINEMFQKIFNIFSRSTSSTGWNETTVENLLATLHWQKEHLETILEEIMEEENFTWDNTTLLNLKKYYLRIVRYLKAKEYSVCAWTVVHAEILRNFFFLERLTDYLQN</sequence>
<evidence type="ECO:0000250" key="1">
    <source>
        <dbReference type="UniProtKB" id="P01574"/>
    </source>
</evidence>
<evidence type="ECO:0000250" key="2">
    <source>
        <dbReference type="UniProtKB" id="P01575"/>
    </source>
</evidence>
<evidence type="ECO:0000250" key="3">
    <source>
        <dbReference type="UniProtKB" id="P70499"/>
    </source>
</evidence>
<evidence type="ECO:0000255" key="4"/>
<evidence type="ECO:0000305" key="5"/>
<reference key="1">
    <citation type="submission" date="1998-12" db="EMBL/GenBank/DDBJ databases">
        <title>Genetic structure of feline interferon beta.</title>
        <authorList>
            <person name="Murakami Y."/>
            <person name="Kubota T."/>
            <person name="Mochizuki M."/>
            <person name="Kishi M."/>
        </authorList>
    </citation>
    <scope>NUCLEOTIDE SEQUENCE [GENOMIC DNA]</scope>
</reference>
<gene>
    <name type="primary">IFNB1</name>
    <name type="synonym">IFNB</name>
</gene>